<gene>
    <name evidence="1" type="primary">rplV</name>
    <name type="ordered locus">Sbal223_4051</name>
</gene>
<accession>B8EBK0</accession>
<comment type="function">
    <text evidence="1">This protein binds specifically to 23S rRNA; its binding is stimulated by other ribosomal proteins, e.g. L4, L17, and L20. It is important during the early stages of 50S assembly. It makes multiple contacts with different domains of the 23S rRNA in the assembled 50S subunit and ribosome (By similarity).</text>
</comment>
<comment type="function">
    <text evidence="1">The globular domain of the protein is located near the polypeptide exit tunnel on the outside of the subunit, while an extended beta-hairpin is found that lines the wall of the exit tunnel in the center of the 70S ribosome.</text>
</comment>
<comment type="subunit">
    <text evidence="1">Part of the 50S ribosomal subunit.</text>
</comment>
<comment type="similarity">
    <text evidence="1">Belongs to the universal ribosomal protein uL22 family.</text>
</comment>
<dbReference type="EMBL" id="CP001252">
    <property type="protein sequence ID" value="ACK48524.1"/>
    <property type="molecule type" value="Genomic_DNA"/>
</dbReference>
<dbReference type="RefSeq" id="WP_006083595.1">
    <property type="nucleotide sequence ID" value="NC_011663.1"/>
</dbReference>
<dbReference type="SMR" id="B8EBK0"/>
<dbReference type="GeneID" id="94726191"/>
<dbReference type="KEGG" id="sbp:Sbal223_4051"/>
<dbReference type="HOGENOM" id="CLU_083987_3_3_6"/>
<dbReference type="Proteomes" id="UP000002507">
    <property type="component" value="Chromosome"/>
</dbReference>
<dbReference type="GO" id="GO:0022625">
    <property type="term" value="C:cytosolic large ribosomal subunit"/>
    <property type="evidence" value="ECO:0007669"/>
    <property type="project" value="TreeGrafter"/>
</dbReference>
<dbReference type="GO" id="GO:0019843">
    <property type="term" value="F:rRNA binding"/>
    <property type="evidence" value="ECO:0007669"/>
    <property type="project" value="UniProtKB-UniRule"/>
</dbReference>
<dbReference type="GO" id="GO:0003735">
    <property type="term" value="F:structural constituent of ribosome"/>
    <property type="evidence" value="ECO:0007669"/>
    <property type="project" value="InterPro"/>
</dbReference>
<dbReference type="GO" id="GO:0006412">
    <property type="term" value="P:translation"/>
    <property type="evidence" value="ECO:0007669"/>
    <property type="project" value="UniProtKB-UniRule"/>
</dbReference>
<dbReference type="CDD" id="cd00336">
    <property type="entry name" value="Ribosomal_L22"/>
    <property type="match status" value="1"/>
</dbReference>
<dbReference type="FunFam" id="3.90.470.10:FF:000001">
    <property type="entry name" value="50S ribosomal protein L22"/>
    <property type="match status" value="1"/>
</dbReference>
<dbReference type="Gene3D" id="3.90.470.10">
    <property type="entry name" value="Ribosomal protein L22/L17"/>
    <property type="match status" value="1"/>
</dbReference>
<dbReference type="HAMAP" id="MF_01331_B">
    <property type="entry name" value="Ribosomal_uL22_B"/>
    <property type="match status" value="1"/>
</dbReference>
<dbReference type="InterPro" id="IPR001063">
    <property type="entry name" value="Ribosomal_uL22"/>
</dbReference>
<dbReference type="InterPro" id="IPR005727">
    <property type="entry name" value="Ribosomal_uL22_bac/chlpt-type"/>
</dbReference>
<dbReference type="InterPro" id="IPR047867">
    <property type="entry name" value="Ribosomal_uL22_bac/org-type"/>
</dbReference>
<dbReference type="InterPro" id="IPR018260">
    <property type="entry name" value="Ribosomal_uL22_CS"/>
</dbReference>
<dbReference type="InterPro" id="IPR036394">
    <property type="entry name" value="Ribosomal_uL22_sf"/>
</dbReference>
<dbReference type="NCBIfam" id="TIGR01044">
    <property type="entry name" value="rplV_bact"/>
    <property type="match status" value="1"/>
</dbReference>
<dbReference type="PANTHER" id="PTHR13501">
    <property type="entry name" value="CHLOROPLAST 50S RIBOSOMAL PROTEIN L22-RELATED"/>
    <property type="match status" value="1"/>
</dbReference>
<dbReference type="PANTHER" id="PTHR13501:SF8">
    <property type="entry name" value="LARGE RIBOSOMAL SUBUNIT PROTEIN UL22M"/>
    <property type="match status" value="1"/>
</dbReference>
<dbReference type="Pfam" id="PF00237">
    <property type="entry name" value="Ribosomal_L22"/>
    <property type="match status" value="1"/>
</dbReference>
<dbReference type="SUPFAM" id="SSF54843">
    <property type="entry name" value="Ribosomal protein L22"/>
    <property type="match status" value="1"/>
</dbReference>
<dbReference type="PROSITE" id="PS00464">
    <property type="entry name" value="RIBOSOMAL_L22"/>
    <property type="match status" value="1"/>
</dbReference>
<evidence type="ECO:0000255" key="1">
    <source>
        <dbReference type="HAMAP-Rule" id="MF_01331"/>
    </source>
</evidence>
<evidence type="ECO:0000305" key="2"/>
<organism>
    <name type="scientific">Shewanella baltica (strain OS223)</name>
    <dbReference type="NCBI Taxonomy" id="407976"/>
    <lineage>
        <taxon>Bacteria</taxon>
        <taxon>Pseudomonadati</taxon>
        <taxon>Pseudomonadota</taxon>
        <taxon>Gammaproteobacteria</taxon>
        <taxon>Alteromonadales</taxon>
        <taxon>Shewanellaceae</taxon>
        <taxon>Shewanella</taxon>
    </lineage>
</organism>
<proteinExistence type="inferred from homology"/>
<reference key="1">
    <citation type="submission" date="2008-12" db="EMBL/GenBank/DDBJ databases">
        <title>Complete sequence of chromosome of Shewanella baltica OS223.</title>
        <authorList>
            <consortium name="US DOE Joint Genome Institute"/>
            <person name="Lucas S."/>
            <person name="Copeland A."/>
            <person name="Lapidus A."/>
            <person name="Glavina del Rio T."/>
            <person name="Dalin E."/>
            <person name="Tice H."/>
            <person name="Bruce D."/>
            <person name="Goodwin L."/>
            <person name="Pitluck S."/>
            <person name="Chertkov O."/>
            <person name="Meincke L."/>
            <person name="Brettin T."/>
            <person name="Detter J.C."/>
            <person name="Han C."/>
            <person name="Kuske C.R."/>
            <person name="Larimer F."/>
            <person name="Land M."/>
            <person name="Hauser L."/>
            <person name="Kyrpides N."/>
            <person name="Ovchinnikova G."/>
            <person name="Brettar I."/>
            <person name="Rodrigues J."/>
            <person name="Konstantinidis K."/>
            <person name="Tiedje J."/>
        </authorList>
    </citation>
    <scope>NUCLEOTIDE SEQUENCE [LARGE SCALE GENOMIC DNA]</scope>
    <source>
        <strain>OS223</strain>
    </source>
</reference>
<sequence>MEVLAKHRFARTSAQKARLVADQIRGLPVAKALEILTFSPKKAAVLVKKVLDSAIANAEHNEGADIDELKVGAVFVDEGPTMKRIMPRAKGRADRIMKRTSHITVVVSDR</sequence>
<feature type="chain" id="PRO_1000166082" description="Large ribosomal subunit protein uL22">
    <location>
        <begin position="1"/>
        <end position="110"/>
    </location>
</feature>
<name>RL22_SHEB2</name>
<protein>
    <recommendedName>
        <fullName evidence="1">Large ribosomal subunit protein uL22</fullName>
    </recommendedName>
    <alternativeName>
        <fullName evidence="2">50S ribosomal protein L22</fullName>
    </alternativeName>
</protein>
<keyword id="KW-0687">Ribonucleoprotein</keyword>
<keyword id="KW-0689">Ribosomal protein</keyword>
<keyword id="KW-0694">RNA-binding</keyword>
<keyword id="KW-0699">rRNA-binding</keyword>